<protein>
    <recommendedName>
        <fullName>Fimbrial protein</fullName>
    </recommendedName>
    <alternativeName>
        <fullName>Pilin</fullName>
    </alternativeName>
</protein>
<reference key="1">
    <citation type="journal article" date="2000" name="Nature">
        <title>Complete DNA sequence of a serogroup A strain of Neisseria meningitidis Z2491.</title>
        <authorList>
            <person name="Parkhill J."/>
            <person name="Achtman M."/>
            <person name="James K.D."/>
            <person name="Bentley S.D."/>
            <person name="Churcher C.M."/>
            <person name="Klee S.R."/>
            <person name="Morelli G."/>
            <person name="Basham D."/>
            <person name="Brown D."/>
            <person name="Chillingworth T."/>
            <person name="Davies R.M."/>
            <person name="Davis P."/>
            <person name="Devlin K."/>
            <person name="Feltwell T."/>
            <person name="Hamlin N."/>
            <person name="Holroyd S."/>
            <person name="Jagels K."/>
            <person name="Leather S."/>
            <person name="Moule S."/>
            <person name="Mungall K.L."/>
            <person name="Quail M.A."/>
            <person name="Rajandream M.A."/>
            <person name="Rutherford K.M."/>
            <person name="Simmonds M."/>
            <person name="Skelton J."/>
            <person name="Whitehead S."/>
            <person name="Spratt B.G."/>
            <person name="Barrell B.G."/>
        </authorList>
    </citation>
    <scope>NUCLEOTIDE SEQUENCE [LARGE SCALE GENOMIC DNA]</scope>
    <source>
        <strain>DSM 15465 / Z2491</strain>
    </source>
</reference>
<reference key="2">
    <citation type="journal article" date="1998" name="Mol. Microbiol.">
        <title>Consequences of the loss of O-linked glycosylation of meningococcal type IV pilin on piliation and pilus-mediated adhesion.</title>
        <authorList>
            <person name="Marceau M."/>
            <person name="Forest K."/>
            <person name="Beretti J.-L."/>
            <person name="Tainer J."/>
            <person name="Nassif X."/>
        </authorList>
    </citation>
    <scope>GLYCOSYLATION AT SER-70</scope>
</reference>
<sequence length="170" mass="18134">MNTLQKGFTLIELMIVIAIVGILAAVALPAYQDYTARAQVSEAILLAEGQKSAVTEYYLNHGEWPSNNTSAGVASSTDIKGKYVQSVEVKNGVVTATMASSNVNNEIKGKKLSLWAKRQDGSVKWFCGQPVKRNDTATTNDDVKADTAANGKQIDTKHLPSTCRDAASAG</sequence>
<organism>
    <name type="scientific">Neisseria meningitidis serogroup A / serotype 4A (strain DSM 15465 / Z2491)</name>
    <dbReference type="NCBI Taxonomy" id="122587"/>
    <lineage>
        <taxon>Bacteria</taxon>
        <taxon>Pseudomonadati</taxon>
        <taxon>Pseudomonadota</taxon>
        <taxon>Betaproteobacteria</taxon>
        <taxon>Neisseriales</taxon>
        <taxon>Neisseriaceae</taxon>
        <taxon>Neisseria</taxon>
    </lineage>
</organism>
<evidence type="ECO:0000250" key="1"/>
<evidence type="ECO:0000250" key="2">
    <source>
        <dbReference type="UniProtKB" id="P05431"/>
    </source>
</evidence>
<evidence type="ECO:0000255" key="3"/>
<evidence type="ECO:0000255" key="4">
    <source>
        <dbReference type="PROSITE-ProRule" id="PRU01070"/>
    </source>
</evidence>
<evidence type="ECO:0000269" key="5">
    <source>
    </source>
</evidence>
<evidence type="ECO:0000305" key="6"/>
<keyword id="KW-0130">Cell adhesion</keyword>
<keyword id="KW-1015">Disulfide bond</keyword>
<keyword id="KW-0281">Fimbrium</keyword>
<keyword id="KW-0325">Glycoprotein</keyword>
<keyword id="KW-0472">Membrane</keyword>
<keyword id="KW-0488">Methylation</keyword>
<keyword id="KW-0597">Phosphoprotein</keyword>
<keyword id="KW-0812">Transmembrane</keyword>
<keyword id="KW-1133">Transmembrane helix</keyword>
<comment type="function">
    <text evidence="2">Major component of the type IV pilus (T4P) that plays a role in cellular adherence, microcolony formation as well as twitching motility.</text>
</comment>
<comment type="subunit">
    <text>The pili are polar flexible filaments of about 5.4 nanometers diameter and 2.5 micrometers average length; they consist of only a single polypeptide chain arranged in a helical configuration of five subunits per turn in the assembled pilus.</text>
</comment>
<comment type="subcellular location">
    <subcellularLocation>
        <location>Fimbrium</location>
    </subcellularLocation>
    <subcellularLocation>
        <location evidence="3">Membrane</location>
        <topology evidence="3">Single-pass membrane protein</topology>
    </subcellularLocation>
</comment>
<comment type="PTM">
    <text evidence="5">O-linked glycan consists of GlcNAc-Gal disaccharide.</text>
</comment>
<comment type="similarity">
    <text evidence="6">Belongs to the N-Me-Phe pilin family.</text>
</comment>
<name>FMM1_NEIMA</name>
<dbReference type="EMBL" id="AL157959">
    <property type="protein sequence ID" value="CAM07570.1"/>
    <property type="molecule type" value="Genomic_DNA"/>
</dbReference>
<dbReference type="PIR" id="D82021">
    <property type="entry name" value="D82021"/>
</dbReference>
<dbReference type="RefSeq" id="WP_010981065.1">
    <property type="nucleotide sequence ID" value="NC_003116.1"/>
</dbReference>
<dbReference type="SMR" id="P57039"/>
<dbReference type="GlyCosmos" id="P57039">
    <property type="glycosylation" value="1 site, No reported glycans"/>
</dbReference>
<dbReference type="iPTMnet" id="P57039"/>
<dbReference type="EnsemblBacteria" id="CAM07570">
    <property type="protein sequence ID" value="CAM07570"/>
    <property type="gene ID" value="NMA0264"/>
</dbReference>
<dbReference type="KEGG" id="nma:NMA0264"/>
<dbReference type="HOGENOM" id="CLU_091705_4_0_4"/>
<dbReference type="Proteomes" id="UP000000626">
    <property type="component" value="Chromosome"/>
</dbReference>
<dbReference type="GO" id="GO:0016020">
    <property type="term" value="C:membrane"/>
    <property type="evidence" value="ECO:0007669"/>
    <property type="project" value="UniProtKB-SubCell"/>
</dbReference>
<dbReference type="GO" id="GO:0009289">
    <property type="term" value="C:pilus"/>
    <property type="evidence" value="ECO:0007669"/>
    <property type="project" value="UniProtKB-SubCell"/>
</dbReference>
<dbReference type="GO" id="GO:0007155">
    <property type="term" value="P:cell adhesion"/>
    <property type="evidence" value="ECO:0007669"/>
    <property type="project" value="UniProtKB-KW"/>
</dbReference>
<dbReference type="Gene3D" id="3.30.700.10">
    <property type="entry name" value="Glycoprotein, Type 4 Pilin"/>
    <property type="match status" value="1"/>
</dbReference>
<dbReference type="InterPro" id="IPR012902">
    <property type="entry name" value="N_methyl_site"/>
</dbReference>
<dbReference type="InterPro" id="IPR001082">
    <property type="entry name" value="Pilin"/>
</dbReference>
<dbReference type="InterPro" id="IPR045584">
    <property type="entry name" value="Pilin-like"/>
</dbReference>
<dbReference type="InterPro" id="IPR050470">
    <property type="entry name" value="T4P/T2SS_Core"/>
</dbReference>
<dbReference type="NCBIfam" id="TIGR02532">
    <property type="entry name" value="IV_pilin_GFxxxE"/>
    <property type="match status" value="1"/>
</dbReference>
<dbReference type="PANTHER" id="PTHR30093">
    <property type="entry name" value="GENERAL SECRETION PATHWAY PROTEIN G"/>
    <property type="match status" value="1"/>
</dbReference>
<dbReference type="PANTHER" id="PTHR30093:SF34">
    <property type="entry name" value="PREPILIN PEPTIDASE-DEPENDENT PROTEIN D"/>
    <property type="match status" value="1"/>
</dbReference>
<dbReference type="Pfam" id="PF07963">
    <property type="entry name" value="N_methyl"/>
    <property type="match status" value="1"/>
</dbReference>
<dbReference type="Pfam" id="PF00114">
    <property type="entry name" value="Pilin"/>
    <property type="match status" value="1"/>
</dbReference>
<dbReference type="SUPFAM" id="SSF54523">
    <property type="entry name" value="Pili subunits"/>
    <property type="match status" value="1"/>
</dbReference>
<dbReference type="PROSITE" id="PS00409">
    <property type="entry name" value="PROKAR_NTER_METHYL"/>
    <property type="match status" value="1"/>
</dbReference>
<accession>P57039</accession>
<accession>A1IPB0</accession>
<feature type="propeptide" id="PRO_0000024162" evidence="1">
    <location>
        <begin position="1"/>
        <end position="7"/>
    </location>
</feature>
<feature type="chain" id="PRO_0000024163" description="Fimbrial protein">
    <location>
        <begin position="8"/>
        <end position="170"/>
    </location>
</feature>
<feature type="transmembrane region" description="Helical" evidence="3">
    <location>
        <begin position="8"/>
        <end position="28"/>
    </location>
</feature>
<feature type="modified residue" description="N-methylphenylalanine" evidence="4">
    <location>
        <position position="8"/>
    </location>
</feature>
<feature type="modified residue" description="O-(sn-1-glycerophosphoryl)serine" evidence="1">
    <location>
        <position position="100"/>
    </location>
</feature>
<feature type="glycosylation site" description="O-linked (Gal...) serine" evidence="5">
    <location>
        <position position="70"/>
    </location>
</feature>
<feature type="disulfide bond" evidence="1">
    <location>
        <begin position="127"/>
        <end position="163"/>
    </location>
</feature>
<proteinExistence type="evidence at protein level"/>
<gene>
    <name type="primary">pilE</name>
    <name type="ordered locus">NMA0264</name>
</gene>